<organism>
    <name type="scientific">Chlorobaculum tepidum (strain ATCC 49652 / DSM 12025 / NBRC 103806 / TLS)</name>
    <name type="common">Chlorobium tepidum</name>
    <dbReference type="NCBI Taxonomy" id="194439"/>
    <lineage>
        <taxon>Bacteria</taxon>
        <taxon>Pseudomonadati</taxon>
        <taxon>Chlorobiota</taxon>
        <taxon>Chlorobiia</taxon>
        <taxon>Chlorobiales</taxon>
        <taxon>Chlorobiaceae</taxon>
        <taxon>Chlorobaculum</taxon>
    </lineage>
</organism>
<name>RL20_CHLTE</name>
<evidence type="ECO:0000255" key="1">
    <source>
        <dbReference type="HAMAP-Rule" id="MF_00382"/>
    </source>
</evidence>
<evidence type="ECO:0000305" key="2"/>
<reference key="1">
    <citation type="journal article" date="2002" name="Proc. Natl. Acad. Sci. U.S.A.">
        <title>The complete genome sequence of Chlorobium tepidum TLS, a photosynthetic, anaerobic, green-sulfur bacterium.</title>
        <authorList>
            <person name="Eisen J.A."/>
            <person name="Nelson K.E."/>
            <person name="Paulsen I.T."/>
            <person name="Heidelberg J.F."/>
            <person name="Wu M."/>
            <person name="Dodson R.J."/>
            <person name="DeBoy R.T."/>
            <person name="Gwinn M.L."/>
            <person name="Nelson W.C."/>
            <person name="Haft D.H."/>
            <person name="Hickey E.K."/>
            <person name="Peterson J.D."/>
            <person name="Durkin A.S."/>
            <person name="Kolonay J.F."/>
            <person name="Yang F."/>
            <person name="Holt I.E."/>
            <person name="Umayam L.A."/>
            <person name="Mason T.M."/>
            <person name="Brenner M."/>
            <person name="Shea T.P."/>
            <person name="Parksey D.S."/>
            <person name="Nierman W.C."/>
            <person name="Feldblyum T.V."/>
            <person name="Hansen C.L."/>
            <person name="Craven M.B."/>
            <person name="Radune D."/>
            <person name="Vamathevan J.J."/>
            <person name="Khouri H.M."/>
            <person name="White O."/>
            <person name="Gruber T.M."/>
            <person name="Ketchum K.A."/>
            <person name="Venter J.C."/>
            <person name="Tettelin H."/>
            <person name="Bryant D.A."/>
            <person name="Fraser C.M."/>
        </authorList>
    </citation>
    <scope>NUCLEOTIDE SEQUENCE [LARGE SCALE GENOMIC DNA]</scope>
    <source>
        <strain>ATCC 49652 / DSM 12025 / NBRC 103806 / TLS</strain>
    </source>
</reference>
<dbReference type="EMBL" id="AE006470">
    <property type="protein sequence ID" value="AAM73345.1"/>
    <property type="molecule type" value="Genomic_DNA"/>
</dbReference>
<dbReference type="RefSeq" id="NP_663003.1">
    <property type="nucleotide sequence ID" value="NC_002932.3"/>
</dbReference>
<dbReference type="RefSeq" id="WP_010933783.1">
    <property type="nucleotide sequence ID" value="NC_002932.3"/>
</dbReference>
<dbReference type="SMR" id="Q8KAM7"/>
<dbReference type="STRING" id="194439.CT2129"/>
<dbReference type="EnsemblBacteria" id="AAM73345">
    <property type="protein sequence ID" value="AAM73345"/>
    <property type="gene ID" value="CT2129"/>
</dbReference>
<dbReference type="KEGG" id="cte:CT2129"/>
<dbReference type="PATRIC" id="fig|194439.7.peg.1930"/>
<dbReference type="eggNOG" id="COG0292">
    <property type="taxonomic scope" value="Bacteria"/>
</dbReference>
<dbReference type="HOGENOM" id="CLU_123265_0_1_10"/>
<dbReference type="OrthoDB" id="9808966at2"/>
<dbReference type="Proteomes" id="UP000001007">
    <property type="component" value="Chromosome"/>
</dbReference>
<dbReference type="GO" id="GO:1990904">
    <property type="term" value="C:ribonucleoprotein complex"/>
    <property type="evidence" value="ECO:0007669"/>
    <property type="project" value="UniProtKB-KW"/>
</dbReference>
<dbReference type="GO" id="GO:0005840">
    <property type="term" value="C:ribosome"/>
    <property type="evidence" value="ECO:0007669"/>
    <property type="project" value="UniProtKB-KW"/>
</dbReference>
<dbReference type="GO" id="GO:0019843">
    <property type="term" value="F:rRNA binding"/>
    <property type="evidence" value="ECO:0007669"/>
    <property type="project" value="UniProtKB-UniRule"/>
</dbReference>
<dbReference type="GO" id="GO:0003735">
    <property type="term" value="F:structural constituent of ribosome"/>
    <property type="evidence" value="ECO:0007669"/>
    <property type="project" value="InterPro"/>
</dbReference>
<dbReference type="GO" id="GO:0000027">
    <property type="term" value="P:ribosomal large subunit assembly"/>
    <property type="evidence" value="ECO:0007669"/>
    <property type="project" value="UniProtKB-UniRule"/>
</dbReference>
<dbReference type="GO" id="GO:0006412">
    <property type="term" value="P:translation"/>
    <property type="evidence" value="ECO:0007669"/>
    <property type="project" value="InterPro"/>
</dbReference>
<dbReference type="CDD" id="cd07026">
    <property type="entry name" value="Ribosomal_L20"/>
    <property type="match status" value="1"/>
</dbReference>
<dbReference type="FunFam" id="1.10.1900.20:FF:000001">
    <property type="entry name" value="50S ribosomal protein L20"/>
    <property type="match status" value="1"/>
</dbReference>
<dbReference type="Gene3D" id="6.10.160.10">
    <property type="match status" value="1"/>
</dbReference>
<dbReference type="Gene3D" id="1.10.1900.20">
    <property type="entry name" value="Ribosomal protein L20"/>
    <property type="match status" value="1"/>
</dbReference>
<dbReference type="HAMAP" id="MF_00382">
    <property type="entry name" value="Ribosomal_bL20"/>
    <property type="match status" value="1"/>
</dbReference>
<dbReference type="InterPro" id="IPR005813">
    <property type="entry name" value="Ribosomal_bL20"/>
</dbReference>
<dbReference type="InterPro" id="IPR049946">
    <property type="entry name" value="RIBOSOMAL_L20_CS"/>
</dbReference>
<dbReference type="InterPro" id="IPR035566">
    <property type="entry name" value="Ribosomal_protein_bL20_C"/>
</dbReference>
<dbReference type="NCBIfam" id="TIGR01032">
    <property type="entry name" value="rplT_bact"/>
    <property type="match status" value="1"/>
</dbReference>
<dbReference type="PANTHER" id="PTHR10986">
    <property type="entry name" value="39S RIBOSOMAL PROTEIN L20"/>
    <property type="match status" value="1"/>
</dbReference>
<dbReference type="Pfam" id="PF00453">
    <property type="entry name" value="Ribosomal_L20"/>
    <property type="match status" value="1"/>
</dbReference>
<dbReference type="PRINTS" id="PR00062">
    <property type="entry name" value="RIBOSOMALL20"/>
</dbReference>
<dbReference type="SUPFAM" id="SSF74731">
    <property type="entry name" value="Ribosomal protein L20"/>
    <property type="match status" value="1"/>
</dbReference>
<dbReference type="PROSITE" id="PS00937">
    <property type="entry name" value="RIBOSOMAL_L20"/>
    <property type="match status" value="1"/>
</dbReference>
<feature type="chain" id="PRO_0000177143" description="Large ribosomal subunit protein bL20">
    <location>
        <begin position="1"/>
        <end position="115"/>
    </location>
</feature>
<protein>
    <recommendedName>
        <fullName evidence="1">Large ribosomal subunit protein bL20</fullName>
    </recommendedName>
    <alternativeName>
        <fullName evidence="2">50S ribosomal protein L20</fullName>
    </alternativeName>
</protein>
<sequence>MPKSTNSVASKARRKRILKKAKGYWGSRGNVLTVVKHAVDKAEQYAYRDRRVKKRNFRSLWIMRINAAARQNGVSYSRLMDAIHKKNIEIDRKALAEIAVKDPAAFSLIVKTALD</sequence>
<proteinExistence type="inferred from homology"/>
<gene>
    <name evidence="1" type="primary">rplT</name>
    <name type="ordered locus">CT2129</name>
</gene>
<comment type="function">
    <text evidence="1">Binds directly to 23S ribosomal RNA and is necessary for the in vitro assembly process of the 50S ribosomal subunit. It is not involved in the protein synthesizing functions of that subunit.</text>
</comment>
<comment type="similarity">
    <text evidence="1">Belongs to the bacterial ribosomal protein bL20 family.</text>
</comment>
<keyword id="KW-1185">Reference proteome</keyword>
<keyword id="KW-0687">Ribonucleoprotein</keyword>
<keyword id="KW-0689">Ribosomal protein</keyword>
<keyword id="KW-0694">RNA-binding</keyword>
<keyword id="KW-0699">rRNA-binding</keyword>
<accession>Q8KAM7</accession>